<organism>
    <name type="scientific">Methanococcus vannielii (strain ATCC 35089 / DSM 1224 / JCM 13029 / OCM 148 / SB)</name>
    <dbReference type="NCBI Taxonomy" id="406327"/>
    <lineage>
        <taxon>Archaea</taxon>
        <taxon>Methanobacteriati</taxon>
        <taxon>Methanobacteriota</taxon>
        <taxon>Methanomada group</taxon>
        <taxon>Methanococci</taxon>
        <taxon>Methanococcales</taxon>
        <taxon>Methanococcaceae</taxon>
        <taxon>Methanococcus</taxon>
    </lineage>
</organism>
<accession>A6UNM1</accession>
<keyword id="KW-0028">Amino-acid biosynthesis</keyword>
<keyword id="KW-0055">Arginine biosynthesis</keyword>
<keyword id="KW-0963">Cytoplasm</keyword>
<keyword id="KW-0808">Transferase</keyword>
<gene>
    <name evidence="2" type="primary">argF</name>
    <name type="ordered locus">Mevan_0182</name>
</gene>
<comment type="function">
    <text evidence="1">Reversibly catalyzes the transfer of the carbamoyl group from carbamoyl phosphate (CP) to the N(epsilon) atom of ornithine (ORN) to produce L-citrulline.</text>
</comment>
<comment type="catalytic activity">
    <reaction evidence="2">
        <text>carbamoyl phosphate + L-ornithine = L-citrulline + phosphate + H(+)</text>
        <dbReference type="Rhea" id="RHEA:19513"/>
        <dbReference type="ChEBI" id="CHEBI:15378"/>
        <dbReference type="ChEBI" id="CHEBI:43474"/>
        <dbReference type="ChEBI" id="CHEBI:46911"/>
        <dbReference type="ChEBI" id="CHEBI:57743"/>
        <dbReference type="ChEBI" id="CHEBI:58228"/>
        <dbReference type="EC" id="2.1.3.3"/>
    </reaction>
</comment>
<comment type="pathway">
    <text evidence="2">Amino-acid biosynthesis; L-arginine biosynthesis; L-arginine from L-ornithine and carbamoyl phosphate: step 1/3.</text>
</comment>
<comment type="subcellular location">
    <subcellularLocation>
        <location evidence="2">Cytoplasm</location>
    </subcellularLocation>
</comment>
<comment type="similarity">
    <text evidence="2">Belongs to the aspartate/ornithine carbamoyltransferase superfamily. OTCase family.</text>
</comment>
<protein>
    <recommendedName>
        <fullName evidence="2">Ornithine carbamoyltransferase</fullName>
        <shortName evidence="2">OTCase</shortName>
        <ecNumber evidence="2">2.1.3.3</ecNumber>
    </recommendedName>
</protein>
<name>OTC_METVS</name>
<reference key="1">
    <citation type="submission" date="2007-06" db="EMBL/GenBank/DDBJ databases">
        <title>Complete sequence of Methanococcus vannielii SB.</title>
        <authorList>
            <consortium name="US DOE Joint Genome Institute"/>
            <person name="Copeland A."/>
            <person name="Lucas S."/>
            <person name="Lapidus A."/>
            <person name="Barry K."/>
            <person name="Glavina del Rio T."/>
            <person name="Dalin E."/>
            <person name="Tice H."/>
            <person name="Pitluck S."/>
            <person name="Chain P."/>
            <person name="Malfatti S."/>
            <person name="Shin M."/>
            <person name="Vergez L."/>
            <person name="Schmutz J."/>
            <person name="Larimer F."/>
            <person name="Land M."/>
            <person name="Hauser L."/>
            <person name="Kyrpides N."/>
            <person name="Anderson I."/>
            <person name="Sieprawska-Lupa M."/>
            <person name="Whitman W.B."/>
            <person name="Richardson P."/>
        </authorList>
    </citation>
    <scope>NUCLEOTIDE SEQUENCE [LARGE SCALE GENOMIC DNA]</scope>
    <source>
        <strain>ATCC 35089 / DSM 1224 / JCM 13029 / OCM 148 / SB</strain>
    </source>
</reference>
<dbReference type="EC" id="2.1.3.3" evidence="2"/>
<dbReference type="EMBL" id="CP000742">
    <property type="protein sequence ID" value="ABR54093.1"/>
    <property type="molecule type" value="Genomic_DNA"/>
</dbReference>
<dbReference type="RefSeq" id="WP_011971997.1">
    <property type="nucleotide sequence ID" value="NC_009634.1"/>
</dbReference>
<dbReference type="SMR" id="A6UNM1"/>
<dbReference type="STRING" id="406327.Mevan_0182"/>
<dbReference type="GeneID" id="5325104"/>
<dbReference type="KEGG" id="mvn:Mevan_0182"/>
<dbReference type="eggNOG" id="arCOG00912">
    <property type="taxonomic scope" value="Archaea"/>
</dbReference>
<dbReference type="HOGENOM" id="CLU_043846_3_2_2"/>
<dbReference type="OrthoDB" id="4696at2157"/>
<dbReference type="UniPathway" id="UPA00068">
    <property type="reaction ID" value="UER00112"/>
</dbReference>
<dbReference type="Proteomes" id="UP000001107">
    <property type="component" value="Chromosome"/>
</dbReference>
<dbReference type="GO" id="GO:0005737">
    <property type="term" value="C:cytoplasm"/>
    <property type="evidence" value="ECO:0007669"/>
    <property type="project" value="UniProtKB-SubCell"/>
</dbReference>
<dbReference type="GO" id="GO:0016597">
    <property type="term" value="F:amino acid binding"/>
    <property type="evidence" value="ECO:0007669"/>
    <property type="project" value="InterPro"/>
</dbReference>
<dbReference type="GO" id="GO:0004585">
    <property type="term" value="F:ornithine carbamoyltransferase activity"/>
    <property type="evidence" value="ECO:0007669"/>
    <property type="project" value="UniProtKB-UniRule"/>
</dbReference>
<dbReference type="GO" id="GO:0042450">
    <property type="term" value="P:arginine biosynthetic process via ornithine"/>
    <property type="evidence" value="ECO:0007669"/>
    <property type="project" value="TreeGrafter"/>
</dbReference>
<dbReference type="GO" id="GO:0019240">
    <property type="term" value="P:citrulline biosynthetic process"/>
    <property type="evidence" value="ECO:0007669"/>
    <property type="project" value="TreeGrafter"/>
</dbReference>
<dbReference type="GO" id="GO:0006526">
    <property type="term" value="P:L-arginine biosynthetic process"/>
    <property type="evidence" value="ECO:0007669"/>
    <property type="project" value="UniProtKB-UniRule"/>
</dbReference>
<dbReference type="FunFam" id="3.40.50.1370:FF:000008">
    <property type="entry name" value="Ornithine carbamoyltransferase"/>
    <property type="match status" value="1"/>
</dbReference>
<dbReference type="Gene3D" id="3.40.50.1370">
    <property type="entry name" value="Aspartate/ornithine carbamoyltransferase"/>
    <property type="match status" value="2"/>
</dbReference>
<dbReference type="HAMAP" id="MF_01109">
    <property type="entry name" value="OTCase"/>
    <property type="match status" value="1"/>
</dbReference>
<dbReference type="InterPro" id="IPR006132">
    <property type="entry name" value="Asp/Orn_carbamoyltranf_P-bd"/>
</dbReference>
<dbReference type="InterPro" id="IPR006130">
    <property type="entry name" value="Asp/Orn_carbamoylTrfase"/>
</dbReference>
<dbReference type="InterPro" id="IPR036901">
    <property type="entry name" value="Asp/Orn_carbamoylTrfase_sf"/>
</dbReference>
<dbReference type="InterPro" id="IPR006131">
    <property type="entry name" value="Asp_carbamoyltransf_Asp/Orn-bd"/>
</dbReference>
<dbReference type="InterPro" id="IPR002292">
    <property type="entry name" value="Orn/put_carbamltrans"/>
</dbReference>
<dbReference type="InterPro" id="IPR024904">
    <property type="entry name" value="OTCase_ArgI"/>
</dbReference>
<dbReference type="NCBIfam" id="TIGR00658">
    <property type="entry name" value="orni_carb_tr"/>
    <property type="match status" value="1"/>
</dbReference>
<dbReference type="NCBIfam" id="NF001986">
    <property type="entry name" value="PRK00779.1"/>
    <property type="match status" value="1"/>
</dbReference>
<dbReference type="PANTHER" id="PTHR45753">
    <property type="entry name" value="ORNITHINE CARBAMOYLTRANSFERASE, MITOCHONDRIAL"/>
    <property type="match status" value="1"/>
</dbReference>
<dbReference type="PANTHER" id="PTHR45753:SF3">
    <property type="entry name" value="ORNITHINE TRANSCARBAMYLASE, MITOCHONDRIAL"/>
    <property type="match status" value="1"/>
</dbReference>
<dbReference type="Pfam" id="PF00185">
    <property type="entry name" value="OTCace"/>
    <property type="match status" value="1"/>
</dbReference>
<dbReference type="Pfam" id="PF02729">
    <property type="entry name" value="OTCace_N"/>
    <property type="match status" value="1"/>
</dbReference>
<dbReference type="PRINTS" id="PR00100">
    <property type="entry name" value="AOTCASE"/>
</dbReference>
<dbReference type="PRINTS" id="PR00102">
    <property type="entry name" value="OTCASE"/>
</dbReference>
<dbReference type="SUPFAM" id="SSF53671">
    <property type="entry name" value="Aspartate/ornithine carbamoyltransferase"/>
    <property type="match status" value="1"/>
</dbReference>
<feature type="chain" id="PRO_1000084852" description="Ornithine carbamoyltransferase">
    <location>
        <begin position="1"/>
        <end position="305"/>
    </location>
</feature>
<feature type="binding site" evidence="2">
    <location>
        <begin position="47"/>
        <end position="50"/>
    </location>
    <ligand>
        <name>carbamoyl phosphate</name>
        <dbReference type="ChEBI" id="CHEBI:58228"/>
    </ligand>
</feature>
<feature type="binding site" evidence="2">
    <location>
        <position position="98"/>
    </location>
    <ligand>
        <name>carbamoyl phosphate</name>
        <dbReference type="ChEBI" id="CHEBI:58228"/>
    </ligand>
</feature>
<feature type="binding site" evidence="2">
    <location>
        <begin position="125"/>
        <end position="128"/>
    </location>
    <ligand>
        <name>carbamoyl phosphate</name>
        <dbReference type="ChEBI" id="CHEBI:58228"/>
    </ligand>
</feature>
<feature type="binding site" evidence="2">
    <location>
        <position position="156"/>
    </location>
    <ligand>
        <name>L-ornithine</name>
        <dbReference type="ChEBI" id="CHEBI:46911"/>
    </ligand>
</feature>
<feature type="binding site" evidence="2">
    <location>
        <position position="221"/>
    </location>
    <ligand>
        <name>L-ornithine</name>
        <dbReference type="ChEBI" id="CHEBI:46911"/>
    </ligand>
</feature>
<feature type="binding site" evidence="2">
    <location>
        <begin position="225"/>
        <end position="226"/>
    </location>
    <ligand>
        <name>L-ornithine</name>
        <dbReference type="ChEBI" id="CHEBI:46911"/>
    </ligand>
</feature>
<feature type="binding site" evidence="2">
    <location>
        <begin position="262"/>
        <end position="263"/>
    </location>
    <ligand>
        <name>carbamoyl phosphate</name>
        <dbReference type="ChEBI" id="CHEBI:58228"/>
    </ligand>
</feature>
<feature type="binding site" evidence="2">
    <location>
        <position position="290"/>
    </location>
    <ligand>
        <name>carbamoyl phosphate</name>
        <dbReference type="ChEBI" id="CHEBI:58228"/>
    </ligand>
</feature>
<proteinExistence type="inferred from homology"/>
<evidence type="ECO:0000250" key="1"/>
<evidence type="ECO:0000255" key="2">
    <source>
        <dbReference type="HAMAP-Rule" id="MF_01109"/>
    </source>
</evidence>
<sequence length="305" mass="34463">MDMLTLWNLEREDMEKILEDSIYFKKNRYGHDILKNKNIALIFESPSTRTRMSFDLAVNELGGHSMVMNENEIHLGKKESIKDTAKVMSRFVDVIVARVKSHKTLEDLAFYGTVPVINALSDLSHPCQVLADLLTIKENGKDFKNLKLAYFGDGNNVSNSLMIAGAILGMNIFIATPRSYEPNGIFVKKALEIIAKYGEGSLTLTDDPIEASKNADVLYTDVWISMSDKNKDLEDVKRIFPKFQINSKLLSNAKKDAMVLHCLPANRGMEITDEVIDSKQSKVFDQAENRLHVQKAVLKYVLKDK</sequence>